<name>PORTL_BPPHC</name>
<feature type="chain" id="PRO_0000432536" description="Probable portal protein">
    <location>
        <begin position="1"/>
        <end position="457"/>
    </location>
</feature>
<feature type="region of interest" description="Disordered" evidence="2">
    <location>
        <begin position="391"/>
        <end position="457"/>
    </location>
</feature>
<feature type="compositionally biased region" description="Pro residues" evidence="2">
    <location>
        <begin position="418"/>
        <end position="427"/>
    </location>
</feature>
<feature type="compositionally biased region" description="Acidic residues" evidence="2">
    <location>
        <begin position="429"/>
        <end position="438"/>
    </location>
</feature>
<feature type="compositionally biased region" description="Acidic residues" evidence="2">
    <location>
        <begin position="446"/>
        <end position="457"/>
    </location>
</feature>
<dbReference type="EMBL" id="AJ006589">
    <property type="protein sequence ID" value="CAA07104.1"/>
    <property type="molecule type" value="Genomic_DNA"/>
</dbReference>
<dbReference type="RefSeq" id="NP_047925.1">
    <property type="nucleotide sequence ID" value="NC_001978.3"/>
</dbReference>
<dbReference type="SMR" id="Q9ZXB2"/>
<dbReference type="GeneID" id="2715872"/>
<dbReference type="KEGG" id="vg:2715872"/>
<dbReference type="OrthoDB" id="3659at10239"/>
<dbReference type="Proteomes" id="UP000002124">
    <property type="component" value="Genome"/>
</dbReference>
<dbReference type="GO" id="GO:0019028">
    <property type="term" value="C:viral capsid"/>
    <property type="evidence" value="ECO:0007669"/>
    <property type="project" value="UniProtKB-KW"/>
</dbReference>
<dbReference type="GO" id="GO:0003677">
    <property type="term" value="F:DNA binding"/>
    <property type="evidence" value="ECO:0007669"/>
    <property type="project" value="UniProtKB-KW"/>
</dbReference>
<dbReference type="GO" id="GO:0008233">
    <property type="term" value="F:peptidase activity"/>
    <property type="evidence" value="ECO:0007669"/>
    <property type="project" value="UniProtKB-KW"/>
</dbReference>
<dbReference type="GO" id="GO:0006508">
    <property type="term" value="P:proteolysis"/>
    <property type="evidence" value="ECO:0007669"/>
    <property type="project" value="UniProtKB-KW"/>
</dbReference>
<dbReference type="GO" id="GO:0099001">
    <property type="term" value="P:symbiont genome ejection through host cell envelope, long flexible tail mechanism"/>
    <property type="evidence" value="ECO:0007669"/>
    <property type="project" value="UniProtKB-KW"/>
</dbReference>
<dbReference type="Gene3D" id="1.20.1270.210">
    <property type="match status" value="1"/>
</dbReference>
<dbReference type="Gene3D" id="3.30.1120.70">
    <property type="match status" value="1"/>
</dbReference>
<dbReference type="Gene3D" id="3.40.140.120">
    <property type="match status" value="1"/>
</dbReference>
<dbReference type="InterPro" id="IPR006944">
    <property type="entry name" value="Phage/GTA_portal"/>
</dbReference>
<dbReference type="InterPro" id="IPR006427">
    <property type="entry name" value="Portal_HK97"/>
</dbReference>
<dbReference type="NCBIfam" id="TIGR01537">
    <property type="entry name" value="portal_HK97"/>
    <property type="match status" value="1"/>
</dbReference>
<dbReference type="Pfam" id="PF04860">
    <property type="entry name" value="Phage_portal"/>
    <property type="match status" value="1"/>
</dbReference>
<keyword id="KW-0167">Capsid protein</keyword>
<keyword id="KW-0238">DNA-binding</keyword>
<keyword id="KW-0378">Hydrolase</keyword>
<keyword id="KW-0645">Protease</keyword>
<keyword id="KW-1185">Reference proteome</keyword>
<keyword id="KW-0118">Viral capsid assembly</keyword>
<keyword id="KW-1171">Viral genome ejection through host cell envelope</keyword>
<keyword id="KW-0231">Viral genome packaging</keyword>
<keyword id="KW-1243">Viral long flexible tail ejection system</keyword>
<keyword id="KW-1162">Viral penetration into host cytoplasm</keyword>
<keyword id="KW-1188">Viral release from host cell</keyword>
<keyword id="KW-0946">Virion</keyword>
<keyword id="KW-1160">Virus entry into host cell</keyword>
<sequence length="457" mass="49842">MGFWSALFGRGHSPALDGIEARAWEPYDPSIYNLGAVAASGETVTPHDALQVSAVFASVRLLSETIATLPLSTYSKRGGSRKEIVTPEWLDYPNAEPGGMGRIDILSQTVLSLLLQGNAFLAVRWQGPNIVGLDVLDPTKIHVHMVMVDGLRRKVFEAYDIDADGNEVLLGWFTPRDVLHIPGMMLPGDFVGCSPISYARESIGLALAAQKYGSKFFANGAMPGAVVEVPGTMSEEGLARAREAWRAANSGVDNAHRVALLTEGAKFSKVAMSPDEAQFLQTRQFQVPEIARIFGVPPHLISDATNSTSWGSGLAEQNIAFTMFSLRPWLERIEAGFNRLLFAETADRFRFVKFNLDEIKRGAPKERMELWSLGLQNGIYSIDEVRAAEDMTPLPDGLGEKYRVPLNLGEVGEEPEPEPAPAPPAIEPPAEEPDEEPEPEGKPDDEGATEEDDEDDA</sequence>
<comment type="function">
    <text evidence="1">Forms the portal vertex of the capsid. This portal plays critical roles in head assembly, genome packaging, neck/tail attachment, and genome ejection. The portal protein multimerizes as a single ring-shaped homododecamer arranged around a central channel. Binds to the terminase subunits to form the packaging machine.</text>
</comment>
<comment type="subunit">
    <text evidence="1">Homododecamer.</text>
</comment>
<comment type="subcellular location">
    <subcellularLocation>
        <location evidence="1">Virion</location>
    </subcellularLocation>
</comment>
<comment type="similarity">
    <text evidence="3">Belongs to the phage portal family.</text>
</comment>
<organism evidence="5">
    <name type="scientific">Streptomyces phage phiC31</name>
    <name type="common">Bacteriophage phi-C31</name>
    <dbReference type="NCBI Taxonomy" id="10719"/>
    <lineage>
        <taxon>Viruses</taxon>
        <taxon>Duplodnaviria</taxon>
        <taxon>Heunggongvirae</taxon>
        <taxon>Uroviricota</taxon>
        <taxon>Caudoviricetes</taxon>
        <taxon>Lomovskayavirus</taxon>
    </lineage>
</organism>
<evidence type="ECO:0000250" key="1">
    <source>
        <dbReference type="UniProtKB" id="P25480"/>
    </source>
</evidence>
<evidence type="ECO:0000256" key="2">
    <source>
        <dbReference type="SAM" id="MobiDB-lite"/>
    </source>
</evidence>
<evidence type="ECO:0000305" key="3"/>
<evidence type="ECO:0000312" key="4">
    <source>
        <dbReference type="EMBL" id="CAA07104.1"/>
    </source>
</evidence>
<evidence type="ECO:0000312" key="5">
    <source>
        <dbReference type="Proteomes" id="UP000002124"/>
    </source>
</evidence>
<reference key="1">
    <citation type="journal article" date="1999" name="Nucleic Acids Res.">
        <title>The complete genome sequence of the Streptomyces temperate phage straight phiC31: evolutionary relationships to other viruses.</title>
        <authorList>
            <person name="Smith M.C."/>
            <person name="Burns R.N."/>
            <person name="Wilson S.E."/>
            <person name="Gregory M.A."/>
        </authorList>
    </citation>
    <scope>NUCLEOTIDE SEQUENCE [GENOMIC DNA]</scope>
    <source>
        <strain evidence="5">Norwich</strain>
    </source>
</reference>
<reference key="2">
    <citation type="journal article" date="1999" name="Proc. Natl. Acad. Sci. U.S.A.">
        <title>Evolutionary relationships among diverse bacteriophages and prophages: all the world's a phage.</title>
        <authorList>
            <person name="Hendrix R.W."/>
            <person name="Smith M.C.M."/>
            <person name="Burns N."/>
            <person name="Ford M.E."/>
            <person name="Hatfull G.F."/>
        </authorList>
    </citation>
    <scope>NUCLEOTIDE SEQUENCE [GENOMIC DNA]</scope>
    <source>
        <strain evidence="5">Norwich</strain>
    </source>
</reference>
<proteinExistence type="inferred from homology"/>
<organismHost>
    <name type="scientific">Streptomyces coelicolor</name>
    <dbReference type="NCBI Taxonomy" id="1902"/>
</organismHost>
<gene>
    <name evidence="4" type="primary">34</name>
</gene>
<protein>
    <recommendedName>
        <fullName>Probable portal protein</fullName>
    </recommendedName>
</protein>
<accession>Q9ZXB2</accession>